<proteinExistence type="evidence at protein level"/>
<reference key="1">
    <citation type="journal article" date="2018" name="BioMetals">
        <title>CatroxMP-II: a heme-modulated fibrinogenolytic metalloproteinase isolated from Crotalus atrox venom.</title>
        <authorList>
            <person name="Suntravat M."/>
            <person name="Langlais P.R."/>
            <person name="Sanchez E.E."/>
            <person name="Nielsen V.G."/>
        </authorList>
    </citation>
    <scope>PROTEIN SEQUENCE</scope>
    <scope>FUNCTION</scope>
    <scope>SUBCELLULAR LOCATION</scope>
    <scope>ACTIVITY REGULATION</scope>
    <source>
        <tissue>Venom</tissue>
    </source>
</reference>
<comment type="function">
    <text evidence="2">Snake venom zinc metalloproteinase that cleaves both alpha- and beta-chains of fibrinogen, but not the gamma-chain (PubMed:29761254).</text>
</comment>
<comment type="cofactor">
    <cofactor evidence="5">
        <name>Zn(2+)</name>
        <dbReference type="ChEBI" id="CHEBI:29105"/>
    </cofactor>
</comment>
<comment type="activity regulation">
    <text evidence="2">Inhibited by carbon monoxide (CO) (PubMed:29761254). This inhibition is explained by the presence of heme attached to the enzyme and modulated by CO (PubMed:29761254). The state change of heme induced by CO (carboxyheme or metheme) may inhibit the enzyme (PubMed:29761254).</text>
</comment>
<comment type="subcellular location">
    <subcellularLocation>
        <location evidence="2">Secreted</location>
    </subcellularLocation>
</comment>
<comment type="tissue specificity">
    <text evidence="5">Expressed by the venom gland.</text>
</comment>
<comment type="PTM">
    <text evidence="1">Contains 3 disulfide bonds.</text>
</comment>
<comment type="miscellaneous">
    <text evidence="5">This is the first SVMP that is heme-bound and carbon monoxide-inhibited. The heme-binding may serve to regulate SVMP activity during envenomation, with both protective and aggressive purposes. First, if the venom gland is elaborating CO via the enzymatic action of heme oxygenase, then inhibition of SVMP by CO is likely important in preventing this enzyme from disrupting the epithelial barrier of the gland and injuring the snake. Second, given that the body temperature of snakes tend to be between 20 and 30 degrees Celsius, the rate of elaboration of CO would not need to be that great to inhibit the enzymes, as the affinity of CO for heme is at its highest in this range. Third, when a prey animal is envenomed, CO would be expected to diffuse from SVMP and bind to the myriad of hemes found in mitochondrial cytochromes and hemoglobin in red cells perfusing the bite site. Fourth, in the case of mammalian prey such as rodents with body temperatures of 36-37 degrees Celsius, it again would be expected that CO would bind less well to heme-bound SVMP and quickly be released. Such rapid removal of CO from SVMP would be analogous to 'unsheathing a sword' allowing enzymatic action to start and ultimately incapacitating the envenomed prey.</text>
</comment>
<comment type="similarity">
    <text evidence="4">Belongs to the venom metalloproteinase (M12B) family. P-II subfamily. P-IIa sub-subfamily.</text>
</comment>
<accession>P0DTB7</accession>
<organism>
    <name type="scientific">Crotalus atrox</name>
    <name type="common">Western diamondback rattlesnake</name>
    <dbReference type="NCBI Taxonomy" id="8730"/>
    <lineage>
        <taxon>Eukaryota</taxon>
        <taxon>Metazoa</taxon>
        <taxon>Chordata</taxon>
        <taxon>Craniata</taxon>
        <taxon>Vertebrata</taxon>
        <taxon>Euteleostomi</taxon>
        <taxon>Lepidosauria</taxon>
        <taxon>Squamata</taxon>
        <taxon>Bifurcata</taxon>
        <taxon>Unidentata</taxon>
        <taxon>Episquamata</taxon>
        <taxon>Toxicofera</taxon>
        <taxon>Serpentes</taxon>
        <taxon>Colubroidea</taxon>
        <taxon>Viperidae</taxon>
        <taxon>Crotalinae</taxon>
        <taxon>Crotalus</taxon>
    </lineage>
</organism>
<protein>
    <recommendedName>
        <fullName evidence="3">Snake venom metalloproteinase CatroxMP-II</fullName>
        <shortName evidence="3">SVMP</shortName>
        <ecNumber evidence="2">3.4.24.-</ecNumber>
    </recommendedName>
    <alternativeName>
        <fullName evidence="3">Fibrinogenolytic metalloproteinase</fullName>
    </alternativeName>
</protein>
<feature type="chain" id="PRO_0000449318" description="Snake venom metalloproteinase CatroxMP-II" evidence="5">
    <location>
        <begin position="1"/>
        <end position="12" status="greater than"/>
    </location>
</feature>
<feature type="non-terminal residue">
    <location>
        <position position="12"/>
    </location>
</feature>
<dbReference type="EC" id="3.4.24.-" evidence="2"/>
<dbReference type="GO" id="GO:0005576">
    <property type="term" value="C:extracellular region"/>
    <property type="evidence" value="ECO:0007669"/>
    <property type="project" value="UniProtKB-SubCell"/>
</dbReference>
<dbReference type="GO" id="GO:0046872">
    <property type="term" value="F:metal ion binding"/>
    <property type="evidence" value="ECO:0007669"/>
    <property type="project" value="UniProtKB-KW"/>
</dbReference>
<dbReference type="GO" id="GO:0008237">
    <property type="term" value="F:metallopeptidase activity"/>
    <property type="evidence" value="ECO:0007669"/>
    <property type="project" value="UniProtKB-KW"/>
</dbReference>
<dbReference type="GO" id="GO:0090729">
    <property type="term" value="F:toxin activity"/>
    <property type="evidence" value="ECO:0007669"/>
    <property type="project" value="UniProtKB-KW"/>
</dbReference>
<dbReference type="GO" id="GO:0006508">
    <property type="term" value="P:proteolysis"/>
    <property type="evidence" value="ECO:0007669"/>
    <property type="project" value="UniProtKB-KW"/>
</dbReference>
<sequence>NPEHQRYVELFI</sequence>
<keyword id="KW-0903">Direct protein sequencing</keyword>
<keyword id="KW-1015">Disulfide bond</keyword>
<keyword id="KW-1206">Fibrinogenolytic toxin</keyword>
<keyword id="KW-1199">Hemostasis impairing toxin</keyword>
<keyword id="KW-0378">Hydrolase</keyword>
<keyword id="KW-0479">Metal-binding</keyword>
<keyword id="KW-0482">Metalloprotease</keyword>
<keyword id="KW-0645">Protease</keyword>
<keyword id="KW-0964">Secreted</keyword>
<keyword id="KW-0800">Toxin</keyword>
<keyword id="KW-0862">Zinc</keyword>
<name>VM2A_CROAT</name>
<evidence type="ECO:0000250" key="1">
    <source>
        <dbReference type="UniProtKB" id="P34182"/>
    </source>
</evidence>
<evidence type="ECO:0000269" key="2">
    <source>
    </source>
</evidence>
<evidence type="ECO:0000303" key="3">
    <source>
    </source>
</evidence>
<evidence type="ECO:0000305" key="4"/>
<evidence type="ECO:0000305" key="5">
    <source>
    </source>
</evidence>